<keyword id="KW-1015">Disulfide bond</keyword>
<keyword id="KW-0281">Fimbrium</keyword>
<keyword id="KW-0732">Signal</keyword>
<organism>
    <name type="scientific">Escherichia coli</name>
    <dbReference type="NCBI Taxonomy" id="562"/>
    <lineage>
        <taxon>Bacteria</taxon>
        <taxon>Pseudomonadati</taxon>
        <taxon>Pseudomonadota</taxon>
        <taxon>Gammaproteobacteria</taxon>
        <taxon>Enterobacterales</taxon>
        <taxon>Enterobacteriaceae</taxon>
        <taxon>Escherichia</taxon>
    </lineage>
</organism>
<reference key="1">
    <citation type="journal article" date="1984" name="Gene">
        <title>Nucleotide sequence of the gene encoding the F72 fimbrial subunit of a uropathogenic Escherichia coli strain.</title>
        <authorList>
            <person name="van Die I."/>
            <person name="Bergmans H."/>
        </authorList>
    </citation>
    <scope>NUCLEOTIDE SEQUENCE [GENOMIC DNA]</scope>
    <source>
        <strain>AD110 / UPEC</strain>
    </source>
</reference>
<reference key="2">
    <citation type="journal article" date="1991" name="Infect. Immun.">
        <title>DNA sequences of three papA genes from uropathogenic Escherichia coli strains: evidence of structural and serological conservation.</title>
        <authorList>
            <person name="Denich K."/>
            <person name="Blyn L.B."/>
            <person name="Craiu A."/>
            <person name="Braaten B.A."/>
            <person name="Hardy J."/>
            <person name="Low D.A."/>
            <person name="O'Hanley P.D."/>
        </authorList>
    </citation>
    <scope>NUCLEOTIDE SEQUENCE [GENOMIC DNA]</scope>
</reference>
<evidence type="ECO:0000305" key="1"/>
<accession>P62607</accession>
<accession>P02972</accession>
<protein>
    <recommendedName>
        <fullName>F7-2 fimbrial protein</fullName>
    </recommendedName>
    <alternativeName>
        <fullName>F7-2 pilin</fullName>
    </alternativeName>
</protein>
<sequence>MIKSVIAGAVAMAVVSFGAYAAPTIPQGQGKVTFNGTVVDAPCGIDAQSADQSIDFGQVSKLFLENDGESQPKSFDIKLINCDITNFKKAAGGGGAKTGTVSLTFSGVPSGPQSDMLQTVGATNTAIVVTDPHGKRVKFDGATATGVSYLVDGDNTIHFTAAVRKDGSGNPVTEGAFSAVANFNLTYQ</sequence>
<comment type="function">
    <text>Fimbriae (also called pili), polar filaments radiating from the surface of the bacterium to a length of 0.5-1.5 micrometers and numbering 100-300 per cell, enable bacteria to colonize the epithelium of specific host organs.</text>
</comment>
<comment type="subcellular location">
    <subcellularLocation>
        <location>Fimbrium</location>
    </subcellularLocation>
</comment>
<comment type="similarity">
    <text evidence="1">Belongs to the fimbrial protein family.</text>
</comment>
<feature type="signal peptide">
    <location>
        <begin position="1"/>
        <end position="21"/>
    </location>
</feature>
<feature type="chain" id="PRO_0000009187" description="F7-2 fimbrial protein">
    <location>
        <begin position="22"/>
        <end position="188"/>
    </location>
</feature>
<feature type="disulfide bond" evidence="1">
    <location>
        <begin position="43"/>
        <end position="82"/>
    </location>
</feature>
<name>FMF2_ECOLX</name>
<proteinExistence type="inferred from homology"/>
<gene>
    <name type="primary">F7-2</name>
    <name type="synonym">papA</name>
</gene>
<dbReference type="EMBL" id="M12861">
    <property type="protein sequence ID" value="AAA23778.1"/>
    <property type="molecule type" value="Genomic_DNA"/>
</dbReference>
<dbReference type="EMBL" id="M68060">
    <property type="protein sequence ID" value="AAA24278.1"/>
    <property type="molecule type" value="Genomic_DNA"/>
</dbReference>
<dbReference type="PIR" id="A03496">
    <property type="entry name" value="YQECF2"/>
</dbReference>
<dbReference type="RefSeq" id="WP_000597756.1">
    <property type="nucleotide sequence ID" value="NZ_WNTO01000033.1"/>
</dbReference>
<dbReference type="SMR" id="P62607"/>
<dbReference type="GO" id="GO:0009289">
    <property type="term" value="C:pilus"/>
    <property type="evidence" value="ECO:0007669"/>
    <property type="project" value="UniProtKB-SubCell"/>
</dbReference>
<dbReference type="GO" id="GO:0043709">
    <property type="term" value="P:cell adhesion involved in single-species biofilm formation"/>
    <property type="evidence" value="ECO:0007669"/>
    <property type="project" value="TreeGrafter"/>
</dbReference>
<dbReference type="Gene3D" id="2.60.40.1090">
    <property type="entry name" value="Fimbrial-type adhesion domain"/>
    <property type="match status" value="1"/>
</dbReference>
<dbReference type="InterPro" id="IPR000259">
    <property type="entry name" value="Adhesion_dom_fimbrial"/>
</dbReference>
<dbReference type="InterPro" id="IPR036937">
    <property type="entry name" value="Adhesion_dom_fimbrial_sf"/>
</dbReference>
<dbReference type="InterPro" id="IPR008966">
    <property type="entry name" value="Adhesion_dom_sf"/>
</dbReference>
<dbReference type="InterPro" id="IPR050263">
    <property type="entry name" value="Bact_Fimbrial_Adh_Pro"/>
</dbReference>
<dbReference type="PANTHER" id="PTHR33420:SF26">
    <property type="entry name" value="FIMBRIAL SUBUNIT"/>
    <property type="match status" value="1"/>
</dbReference>
<dbReference type="PANTHER" id="PTHR33420">
    <property type="entry name" value="FIMBRIAL SUBUNIT ELFA-RELATED"/>
    <property type="match status" value="1"/>
</dbReference>
<dbReference type="Pfam" id="PF00419">
    <property type="entry name" value="Fimbrial"/>
    <property type="match status" value="1"/>
</dbReference>
<dbReference type="SUPFAM" id="SSF49401">
    <property type="entry name" value="Bacterial adhesins"/>
    <property type="match status" value="1"/>
</dbReference>